<comment type="catalytic activity">
    <reaction evidence="1">
        <text>(2R)-3-phosphoglycerate + ATP = (2R)-3-phospho-glyceroyl phosphate + ADP</text>
        <dbReference type="Rhea" id="RHEA:14801"/>
        <dbReference type="ChEBI" id="CHEBI:30616"/>
        <dbReference type="ChEBI" id="CHEBI:57604"/>
        <dbReference type="ChEBI" id="CHEBI:58272"/>
        <dbReference type="ChEBI" id="CHEBI:456216"/>
        <dbReference type="EC" id="2.7.2.3"/>
    </reaction>
</comment>
<comment type="pathway">
    <text evidence="1">Carbohydrate degradation; glycolysis; pyruvate from D-glyceraldehyde 3-phosphate: step 2/5.</text>
</comment>
<comment type="subunit">
    <text evidence="1">Monomer.</text>
</comment>
<comment type="subcellular location">
    <subcellularLocation>
        <location evidence="1">Cytoplasm</location>
    </subcellularLocation>
</comment>
<comment type="similarity">
    <text evidence="1">Belongs to the phosphoglycerate kinase family.</text>
</comment>
<keyword id="KW-0067">ATP-binding</keyword>
<keyword id="KW-0963">Cytoplasm</keyword>
<keyword id="KW-0324">Glycolysis</keyword>
<keyword id="KW-0418">Kinase</keyword>
<keyword id="KW-0547">Nucleotide-binding</keyword>
<keyword id="KW-0808">Transferase</keyword>
<dbReference type="EC" id="2.7.2.3" evidence="1"/>
<dbReference type="EMBL" id="CP000538">
    <property type="protein sequence ID" value="EAQ72746.1"/>
    <property type="molecule type" value="Genomic_DNA"/>
</dbReference>
<dbReference type="RefSeq" id="WP_002871986.1">
    <property type="nucleotide sequence ID" value="NC_008787.1"/>
</dbReference>
<dbReference type="SMR" id="A1W116"/>
<dbReference type="KEGG" id="cjj:CJJ81176_1401"/>
<dbReference type="eggNOG" id="COG0126">
    <property type="taxonomic scope" value="Bacteria"/>
</dbReference>
<dbReference type="HOGENOM" id="CLU_025427_0_2_7"/>
<dbReference type="UniPathway" id="UPA00109">
    <property type="reaction ID" value="UER00185"/>
</dbReference>
<dbReference type="Proteomes" id="UP000000646">
    <property type="component" value="Chromosome"/>
</dbReference>
<dbReference type="GO" id="GO:0005829">
    <property type="term" value="C:cytosol"/>
    <property type="evidence" value="ECO:0007669"/>
    <property type="project" value="TreeGrafter"/>
</dbReference>
<dbReference type="GO" id="GO:0043531">
    <property type="term" value="F:ADP binding"/>
    <property type="evidence" value="ECO:0007669"/>
    <property type="project" value="TreeGrafter"/>
</dbReference>
<dbReference type="GO" id="GO:0005524">
    <property type="term" value="F:ATP binding"/>
    <property type="evidence" value="ECO:0007669"/>
    <property type="project" value="UniProtKB-KW"/>
</dbReference>
<dbReference type="GO" id="GO:0004618">
    <property type="term" value="F:phosphoglycerate kinase activity"/>
    <property type="evidence" value="ECO:0007669"/>
    <property type="project" value="UniProtKB-UniRule"/>
</dbReference>
<dbReference type="GO" id="GO:0006094">
    <property type="term" value="P:gluconeogenesis"/>
    <property type="evidence" value="ECO:0007669"/>
    <property type="project" value="TreeGrafter"/>
</dbReference>
<dbReference type="GO" id="GO:0006096">
    <property type="term" value="P:glycolytic process"/>
    <property type="evidence" value="ECO:0007669"/>
    <property type="project" value="UniProtKB-UniRule"/>
</dbReference>
<dbReference type="FunFam" id="3.40.50.1260:FF:000003">
    <property type="entry name" value="Phosphoglycerate kinase"/>
    <property type="match status" value="1"/>
</dbReference>
<dbReference type="FunFam" id="3.40.50.1260:FF:000006">
    <property type="entry name" value="Phosphoglycerate kinase"/>
    <property type="match status" value="1"/>
</dbReference>
<dbReference type="Gene3D" id="3.40.50.1260">
    <property type="entry name" value="Phosphoglycerate kinase, N-terminal domain"/>
    <property type="match status" value="2"/>
</dbReference>
<dbReference type="HAMAP" id="MF_00145">
    <property type="entry name" value="Phosphoglyc_kinase"/>
    <property type="match status" value="1"/>
</dbReference>
<dbReference type="InterPro" id="IPR001576">
    <property type="entry name" value="Phosphoglycerate_kinase"/>
</dbReference>
<dbReference type="InterPro" id="IPR015911">
    <property type="entry name" value="Phosphoglycerate_kinase_CS"/>
</dbReference>
<dbReference type="InterPro" id="IPR015824">
    <property type="entry name" value="Phosphoglycerate_kinase_N"/>
</dbReference>
<dbReference type="InterPro" id="IPR036043">
    <property type="entry name" value="Phosphoglycerate_kinase_sf"/>
</dbReference>
<dbReference type="PANTHER" id="PTHR11406">
    <property type="entry name" value="PHOSPHOGLYCERATE KINASE"/>
    <property type="match status" value="1"/>
</dbReference>
<dbReference type="PANTHER" id="PTHR11406:SF23">
    <property type="entry name" value="PHOSPHOGLYCERATE KINASE 1, CHLOROPLASTIC-RELATED"/>
    <property type="match status" value="1"/>
</dbReference>
<dbReference type="Pfam" id="PF00162">
    <property type="entry name" value="PGK"/>
    <property type="match status" value="1"/>
</dbReference>
<dbReference type="PIRSF" id="PIRSF000724">
    <property type="entry name" value="Pgk"/>
    <property type="match status" value="1"/>
</dbReference>
<dbReference type="PRINTS" id="PR00477">
    <property type="entry name" value="PHGLYCKINASE"/>
</dbReference>
<dbReference type="SUPFAM" id="SSF53748">
    <property type="entry name" value="Phosphoglycerate kinase"/>
    <property type="match status" value="1"/>
</dbReference>
<dbReference type="PROSITE" id="PS00111">
    <property type="entry name" value="PGLYCERATE_KINASE"/>
    <property type="match status" value="1"/>
</dbReference>
<reference key="1">
    <citation type="submission" date="2006-12" db="EMBL/GenBank/DDBJ databases">
        <authorList>
            <person name="Fouts D.E."/>
            <person name="Nelson K.E."/>
            <person name="Sebastian Y."/>
        </authorList>
    </citation>
    <scope>NUCLEOTIDE SEQUENCE [LARGE SCALE GENOMIC DNA]</scope>
    <source>
        <strain>81-176</strain>
    </source>
</reference>
<name>PGK_CAMJJ</name>
<organism>
    <name type="scientific">Campylobacter jejuni subsp. jejuni serotype O:23/36 (strain 81-176)</name>
    <dbReference type="NCBI Taxonomy" id="354242"/>
    <lineage>
        <taxon>Bacteria</taxon>
        <taxon>Pseudomonadati</taxon>
        <taxon>Campylobacterota</taxon>
        <taxon>Epsilonproteobacteria</taxon>
        <taxon>Campylobacterales</taxon>
        <taxon>Campylobacteraceae</taxon>
        <taxon>Campylobacter</taxon>
    </lineage>
</organism>
<protein>
    <recommendedName>
        <fullName evidence="1">Phosphoglycerate kinase</fullName>
        <ecNumber evidence="1">2.7.2.3</ecNumber>
    </recommendedName>
</protein>
<accession>A1W116</accession>
<proteinExistence type="inferred from homology"/>
<sequence length="400" mass="43619">MSDIISIKDIDLAKKKVFIRCDFNVPQDDFLNITDDRRIRSAIPTIRYCLDNGCSVILASHLGRPKEISSKYSLEPVAKRLARLLDKEIVMAKDVIGEDAKTKAMNLKVGEILLLENLRFEKGETKNDENLAKELASMVQVYINDAFGVCHRAHSSVEAITKFFDEKHKGAGFLLQKEIDFASNLIKHPARPFVAVVGGSKVSGKLQALTNLLPKVDKLIIGGGMAFTFLKALGYDIGNSLLEEELLEEANKILTKGKNLGVKIYLPVDVVAAPACSQDVPMKFVPAQEIPNGWMGLDIGPASVRLFKEVISDAQTIWWNGPMGVFEIDKFSKGSIKMSHYISEGHATSVVGGGDTADVVARAGDADEMTFISTGGGASLELIEGKELPGVKALRSKENE</sequence>
<evidence type="ECO:0000255" key="1">
    <source>
        <dbReference type="HAMAP-Rule" id="MF_00145"/>
    </source>
</evidence>
<feature type="chain" id="PRO_1000203327" description="Phosphoglycerate kinase">
    <location>
        <begin position="1"/>
        <end position="400"/>
    </location>
</feature>
<feature type="binding site" evidence="1">
    <location>
        <begin position="22"/>
        <end position="24"/>
    </location>
    <ligand>
        <name>substrate</name>
    </ligand>
</feature>
<feature type="binding site" evidence="1">
    <location>
        <position position="38"/>
    </location>
    <ligand>
        <name>substrate</name>
    </ligand>
</feature>
<feature type="binding site" evidence="1">
    <location>
        <begin position="61"/>
        <end position="64"/>
    </location>
    <ligand>
        <name>substrate</name>
    </ligand>
</feature>
<feature type="binding site" evidence="1">
    <location>
        <position position="119"/>
    </location>
    <ligand>
        <name>substrate</name>
    </ligand>
</feature>
<feature type="binding site" evidence="1">
    <location>
        <position position="152"/>
    </location>
    <ligand>
        <name>substrate</name>
    </ligand>
</feature>
<feature type="binding site" evidence="1">
    <location>
        <position position="205"/>
    </location>
    <ligand>
        <name>ATP</name>
        <dbReference type="ChEBI" id="CHEBI:30616"/>
    </ligand>
</feature>
<feature type="binding site" evidence="1">
    <location>
        <position position="296"/>
    </location>
    <ligand>
        <name>ATP</name>
        <dbReference type="ChEBI" id="CHEBI:30616"/>
    </ligand>
</feature>
<feature type="binding site" evidence="1">
    <location>
        <position position="327"/>
    </location>
    <ligand>
        <name>ATP</name>
        <dbReference type="ChEBI" id="CHEBI:30616"/>
    </ligand>
</feature>
<feature type="binding site" evidence="1">
    <location>
        <begin position="353"/>
        <end position="356"/>
    </location>
    <ligand>
        <name>ATP</name>
        <dbReference type="ChEBI" id="CHEBI:30616"/>
    </ligand>
</feature>
<gene>
    <name evidence="1" type="primary">pgk</name>
    <name type="ordered locus">CJJ81176_1401</name>
</gene>